<proteinExistence type="inferred from homology"/>
<keyword id="KW-0325">Glycoprotein</keyword>
<keyword id="KW-0333">Golgi apparatus</keyword>
<keyword id="KW-0472">Membrane</keyword>
<keyword id="KW-1185">Reference proteome</keyword>
<keyword id="KW-0735">Signal-anchor</keyword>
<keyword id="KW-0808">Transferase</keyword>
<keyword id="KW-0812">Transmembrane</keyword>
<keyword id="KW-1133">Transmembrane helix</keyword>
<keyword id="KW-0926">Vacuole</keyword>
<sequence length="384" mass="44512">MGNKKATLLPYRRDSASSEADFFDIPDEPCLAIAKRQLRRIRTWIFFAVFIILILWFRREAPSPAPVSHIDYNKVDWSRYAYSQYATSSAYLCNAVMVFEALERLGSRADRVLFYPEDWDLFVADDHDRDSQLLVLAKEKYKALLVPISAEMIKAGGGSGESWDKSIAKLLAFGETEYDRVIHIDSDVTVLQSMDELFFLPPAKVAMPRAYWALPDTKTLSSLLIVIEPSYREFKALMESAQPALHGQVEVDSNETQRYDMELLNNRYADSALVLPHRQYGLVTGEFRKKDHRSFFGNDYETWDPDKVLAEAKLVHFSDWPLPKPWVLSNQKLLAEILPKCDFKPGTMQERGCRDREVWKSLYEDFRRRRKVCPKIRTIHTEYG</sequence>
<comment type="function">
    <text evidence="1">N-acetylglucosaminyltransferase involved in the Golgi-specific modification of N-linked glycans.</text>
</comment>
<comment type="subcellular location">
    <subcellularLocation>
        <location evidence="1">Golgi apparatus membrane</location>
        <topology evidence="1">Single-pass type II membrane protein</topology>
    </subcellularLocation>
    <subcellularLocation>
        <location evidence="1">Vacuole membrane</location>
        <topology evidence="1">Single-pass type II membrane protein</topology>
    </subcellularLocation>
</comment>
<comment type="similarity">
    <text evidence="3">Belongs to the GNT1 family.</text>
</comment>
<gene>
    <name type="primary">gnt1</name>
    <name type="ORF">AFUA_8G02690</name>
</gene>
<dbReference type="EC" id="2.4.1.-"/>
<dbReference type="EMBL" id="AAHF01000014">
    <property type="protein sequence ID" value="EAL84900.1"/>
    <property type="molecule type" value="Genomic_DNA"/>
</dbReference>
<dbReference type="RefSeq" id="XP_746938.1">
    <property type="nucleotide sequence ID" value="XM_741845.1"/>
</dbReference>
<dbReference type="FunCoup" id="Q4WBL2">
    <property type="interactions" value="12"/>
</dbReference>
<dbReference type="STRING" id="330879.Q4WBL2"/>
<dbReference type="GlyCosmos" id="Q4WBL2">
    <property type="glycosylation" value="1 site, No reported glycans"/>
</dbReference>
<dbReference type="EnsemblFungi" id="EAL84900">
    <property type="protein sequence ID" value="EAL84900"/>
    <property type="gene ID" value="AFUA_8G02690"/>
</dbReference>
<dbReference type="GeneID" id="3504359"/>
<dbReference type="KEGG" id="afm:AFUA_8G02690"/>
<dbReference type="VEuPathDB" id="FungiDB:Afu8g02690"/>
<dbReference type="eggNOG" id="KOG1950">
    <property type="taxonomic scope" value="Eukaryota"/>
</dbReference>
<dbReference type="HOGENOM" id="CLU_034860_1_0_1"/>
<dbReference type="InParanoid" id="Q4WBL2"/>
<dbReference type="OMA" id="CRDREVW"/>
<dbReference type="OrthoDB" id="2014201at2759"/>
<dbReference type="Proteomes" id="UP000002530">
    <property type="component" value="Chromosome 8"/>
</dbReference>
<dbReference type="GO" id="GO:0000139">
    <property type="term" value="C:Golgi membrane"/>
    <property type="evidence" value="ECO:0007669"/>
    <property type="project" value="UniProtKB-SubCell"/>
</dbReference>
<dbReference type="GO" id="GO:0005774">
    <property type="term" value="C:vacuolar membrane"/>
    <property type="evidence" value="ECO:0007669"/>
    <property type="project" value="UniProtKB-SubCell"/>
</dbReference>
<dbReference type="GO" id="GO:0016757">
    <property type="term" value="F:glycosyltransferase activity"/>
    <property type="evidence" value="ECO:0000318"/>
    <property type="project" value="GO_Central"/>
</dbReference>
<dbReference type="CDD" id="cd06914">
    <property type="entry name" value="GT8_GNT1"/>
    <property type="match status" value="1"/>
</dbReference>
<dbReference type="Gene3D" id="3.90.550.10">
    <property type="entry name" value="Spore Coat Polysaccharide Biosynthesis Protein SpsA, Chain A"/>
    <property type="match status" value="1"/>
</dbReference>
<dbReference type="InterPro" id="IPR050587">
    <property type="entry name" value="GNT1/Glycosyltrans_8"/>
</dbReference>
<dbReference type="InterPro" id="IPR029044">
    <property type="entry name" value="Nucleotide-diphossugar_trans"/>
</dbReference>
<dbReference type="PANTHER" id="PTHR11183">
    <property type="entry name" value="GLYCOGENIN SUBFAMILY MEMBER"/>
    <property type="match status" value="1"/>
</dbReference>
<dbReference type="SUPFAM" id="SSF53448">
    <property type="entry name" value="Nucleotide-diphospho-sugar transferases"/>
    <property type="match status" value="1"/>
</dbReference>
<name>GNT1_ASPFU</name>
<feature type="chain" id="PRO_0000087531" description="Glucose N-acetyltransferase 1">
    <location>
        <begin position="1"/>
        <end position="384"/>
    </location>
</feature>
<feature type="topological domain" description="Cytoplasmic" evidence="2">
    <location>
        <begin position="1"/>
        <end position="39"/>
    </location>
</feature>
<feature type="transmembrane region" description="Helical; Signal-anchor for type II membrane protein" evidence="2">
    <location>
        <begin position="40"/>
        <end position="57"/>
    </location>
</feature>
<feature type="topological domain" description="Lumenal" evidence="2">
    <location>
        <begin position="58"/>
        <end position="384"/>
    </location>
</feature>
<feature type="short sequence motif" description="DXD">
    <location>
        <begin position="185"/>
        <end position="187"/>
    </location>
</feature>
<feature type="glycosylation site" description="N-linked (GlcNAc...) asparagine" evidence="2">
    <location>
        <position position="254"/>
    </location>
</feature>
<organism>
    <name type="scientific">Aspergillus fumigatus (strain ATCC MYA-4609 / CBS 101355 / FGSC A1100 / Af293)</name>
    <name type="common">Neosartorya fumigata</name>
    <dbReference type="NCBI Taxonomy" id="330879"/>
    <lineage>
        <taxon>Eukaryota</taxon>
        <taxon>Fungi</taxon>
        <taxon>Dikarya</taxon>
        <taxon>Ascomycota</taxon>
        <taxon>Pezizomycotina</taxon>
        <taxon>Eurotiomycetes</taxon>
        <taxon>Eurotiomycetidae</taxon>
        <taxon>Eurotiales</taxon>
        <taxon>Aspergillaceae</taxon>
        <taxon>Aspergillus</taxon>
        <taxon>Aspergillus subgen. Fumigati</taxon>
    </lineage>
</organism>
<reference key="1">
    <citation type="journal article" date="2005" name="Nature">
        <title>Genomic sequence of the pathogenic and allergenic filamentous fungus Aspergillus fumigatus.</title>
        <authorList>
            <person name="Nierman W.C."/>
            <person name="Pain A."/>
            <person name="Anderson M.J."/>
            <person name="Wortman J.R."/>
            <person name="Kim H.S."/>
            <person name="Arroyo J."/>
            <person name="Berriman M."/>
            <person name="Abe K."/>
            <person name="Archer D.B."/>
            <person name="Bermejo C."/>
            <person name="Bennett J.W."/>
            <person name="Bowyer P."/>
            <person name="Chen D."/>
            <person name="Collins M."/>
            <person name="Coulsen R."/>
            <person name="Davies R."/>
            <person name="Dyer P.S."/>
            <person name="Farman M.L."/>
            <person name="Fedorova N."/>
            <person name="Fedorova N.D."/>
            <person name="Feldblyum T.V."/>
            <person name="Fischer R."/>
            <person name="Fosker N."/>
            <person name="Fraser A."/>
            <person name="Garcia J.L."/>
            <person name="Garcia M.J."/>
            <person name="Goble A."/>
            <person name="Goldman G.H."/>
            <person name="Gomi K."/>
            <person name="Griffith-Jones S."/>
            <person name="Gwilliam R."/>
            <person name="Haas B.J."/>
            <person name="Haas H."/>
            <person name="Harris D.E."/>
            <person name="Horiuchi H."/>
            <person name="Huang J."/>
            <person name="Humphray S."/>
            <person name="Jimenez J."/>
            <person name="Keller N."/>
            <person name="Khouri H."/>
            <person name="Kitamoto K."/>
            <person name="Kobayashi T."/>
            <person name="Konzack S."/>
            <person name="Kulkarni R."/>
            <person name="Kumagai T."/>
            <person name="Lafton A."/>
            <person name="Latge J.-P."/>
            <person name="Li W."/>
            <person name="Lord A."/>
            <person name="Lu C."/>
            <person name="Majoros W.H."/>
            <person name="May G.S."/>
            <person name="Miller B.L."/>
            <person name="Mohamoud Y."/>
            <person name="Molina M."/>
            <person name="Monod M."/>
            <person name="Mouyna I."/>
            <person name="Mulligan S."/>
            <person name="Murphy L.D."/>
            <person name="O'Neil S."/>
            <person name="Paulsen I."/>
            <person name="Penalva M.A."/>
            <person name="Pertea M."/>
            <person name="Price C."/>
            <person name="Pritchard B.L."/>
            <person name="Quail M.A."/>
            <person name="Rabbinowitsch E."/>
            <person name="Rawlins N."/>
            <person name="Rajandream M.A."/>
            <person name="Reichard U."/>
            <person name="Renauld H."/>
            <person name="Robson G.D."/>
            <person name="Rodriguez de Cordoba S."/>
            <person name="Rodriguez-Pena J.M."/>
            <person name="Ronning C.M."/>
            <person name="Rutter S."/>
            <person name="Salzberg S.L."/>
            <person name="Sanchez M."/>
            <person name="Sanchez-Ferrero J.C."/>
            <person name="Saunders D."/>
            <person name="Seeger K."/>
            <person name="Squares R."/>
            <person name="Squares S."/>
            <person name="Takeuchi M."/>
            <person name="Tekaia F."/>
            <person name="Turner G."/>
            <person name="Vazquez de Aldana C.R."/>
            <person name="Weidman J."/>
            <person name="White O."/>
            <person name="Woodward J.R."/>
            <person name="Yu J.-H."/>
            <person name="Fraser C.M."/>
            <person name="Galagan J.E."/>
            <person name="Asai K."/>
            <person name="Machida M."/>
            <person name="Hall N."/>
            <person name="Barrell B.G."/>
            <person name="Denning D.W."/>
        </authorList>
    </citation>
    <scope>NUCLEOTIDE SEQUENCE [LARGE SCALE GENOMIC DNA]</scope>
    <source>
        <strain>ATCC MYA-4609 / CBS 101355 / FGSC A1100 / Af293</strain>
    </source>
</reference>
<evidence type="ECO:0000250" key="1"/>
<evidence type="ECO:0000255" key="2"/>
<evidence type="ECO:0000305" key="3"/>
<protein>
    <recommendedName>
        <fullName>Glucose N-acetyltransferase 1</fullName>
        <ecNumber>2.4.1.-</ecNumber>
    </recommendedName>
    <alternativeName>
        <fullName>N-acetylglucosaminyltransferase</fullName>
    </alternativeName>
</protein>
<accession>Q4WBL2</accession>